<accession>A6SSX6</accession>
<accession>A0A384J3W0</accession>
<protein>
    <recommendedName>
        <fullName>Respiratory supercomplex factor 1, mitochondrial</fullName>
    </recommendedName>
</protein>
<name>RCF1_BOTFB</name>
<evidence type="ECO:0000250" key="1"/>
<evidence type="ECO:0000255" key="2"/>
<evidence type="ECO:0000255" key="3">
    <source>
        <dbReference type="PROSITE-ProRule" id="PRU00836"/>
    </source>
</evidence>
<evidence type="ECO:0000256" key="4">
    <source>
        <dbReference type="SAM" id="MobiDB-lite"/>
    </source>
</evidence>
<evidence type="ECO:0000305" key="5"/>
<dbReference type="EMBL" id="CP009805">
    <property type="protein sequence ID" value="ATZ45200.1"/>
    <property type="molecule type" value="Genomic_DNA"/>
</dbReference>
<dbReference type="SMR" id="A6SSX6"/>
<dbReference type="EnsemblFungi" id="Bcin01g00220.1">
    <property type="protein sequence ID" value="Bcin01p00220.1"/>
    <property type="gene ID" value="Bcin01g00220"/>
</dbReference>
<dbReference type="GeneID" id="5426061"/>
<dbReference type="KEGG" id="bfu:BCIN_01g00220"/>
<dbReference type="VEuPathDB" id="FungiDB:Bcin01g00220"/>
<dbReference type="OMA" id="QRWIREL"/>
<dbReference type="OrthoDB" id="6604018at2759"/>
<dbReference type="Proteomes" id="UP000001798">
    <property type="component" value="Chromosome bcin01"/>
</dbReference>
<dbReference type="GO" id="GO:0031966">
    <property type="term" value="C:mitochondrial membrane"/>
    <property type="evidence" value="ECO:0007669"/>
    <property type="project" value="UniProtKB-SubCell"/>
</dbReference>
<dbReference type="GO" id="GO:0097250">
    <property type="term" value="P:mitochondrial respirasome assembly"/>
    <property type="evidence" value="ECO:0007669"/>
    <property type="project" value="TreeGrafter"/>
</dbReference>
<dbReference type="Gene3D" id="6.10.140.1320">
    <property type="match status" value="1"/>
</dbReference>
<dbReference type="InterPro" id="IPR007667">
    <property type="entry name" value="Hypoxia_induced_domain"/>
</dbReference>
<dbReference type="InterPro" id="IPR050355">
    <property type="entry name" value="RCF1"/>
</dbReference>
<dbReference type="PANTHER" id="PTHR12297:SF3">
    <property type="entry name" value="HIG1 DOMAIN FAMILY MEMBER 1A"/>
    <property type="match status" value="1"/>
</dbReference>
<dbReference type="PANTHER" id="PTHR12297">
    <property type="entry name" value="HYPOXIA-INDUCBILE GENE 1 HIG1 -RELATED"/>
    <property type="match status" value="1"/>
</dbReference>
<dbReference type="Pfam" id="PF04588">
    <property type="entry name" value="HIG_1_N"/>
    <property type="match status" value="1"/>
</dbReference>
<dbReference type="PROSITE" id="PS51503">
    <property type="entry name" value="HIG1"/>
    <property type="match status" value="1"/>
</dbReference>
<gene>
    <name type="primary">rcf1</name>
    <name type="synonym">aim31</name>
    <name type="ORF">BC1G_15810</name>
    <name type="ORF">BCIN_01g00220</name>
</gene>
<organism>
    <name type="scientific">Botryotinia fuckeliana (strain B05.10)</name>
    <name type="common">Noble rot fungus</name>
    <name type="synonym">Botrytis cinerea</name>
    <dbReference type="NCBI Taxonomy" id="332648"/>
    <lineage>
        <taxon>Eukaryota</taxon>
        <taxon>Fungi</taxon>
        <taxon>Dikarya</taxon>
        <taxon>Ascomycota</taxon>
        <taxon>Pezizomycotina</taxon>
        <taxon>Leotiomycetes</taxon>
        <taxon>Helotiales</taxon>
        <taxon>Sclerotiniaceae</taxon>
        <taxon>Botrytis</taxon>
    </lineage>
</organism>
<keyword id="KW-0175">Coiled coil</keyword>
<keyword id="KW-0472">Membrane</keyword>
<keyword id="KW-0496">Mitochondrion</keyword>
<keyword id="KW-1185">Reference proteome</keyword>
<keyword id="KW-0812">Transmembrane</keyword>
<keyword id="KW-1133">Transmembrane helix</keyword>
<feature type="chain" id="PRO_0000399622" description="Respiratory supercomplex factor 1, mitochondrial">
    <location>
        <begin position="1"/>
        <end position="175"/>
    </location>
</feature>
<feature type="transmembrane region" description="Helical" evidence="3">
    <location>
        <begin position="35"/>
        <end position="57"/>
    </location>
</feature>
<feature type="transmembrane region" description="Helical" evidence="3">
    <location>
        <begin position="70"/>
        <end position="87"/>
    </location>
</feature>
<feature type="domain" description="HIG1" evidence="3">
    <location>
        <begin position="7"/>
        <end position="98"/>
    </location>
</feature>
<feature type="region of interest" description="Disordered" evidence="4">
    <location>
        <begin position="118"/>
        <end position="175"/>
    </location>
</feature>
<feature type="coiled-coil region" evidence="2">
    <location>
        <begin position="106"/>
        <end position="139"/>
    </location>
</feature>
<feature type="compositionally biased region" description="Basic and acidic residues" evidence="4">
    <location>
        <begin position="125"/>
        <end position="142"/>
    </location>
</feature>
<comment type="function">
    <text evidence="1">Cytochrome c oxidase subunit which plays a role in assembly of respiratory supercomplexes.</text>
</comment>
<comment type="subunit">
    <text evidence="1">Associates with the respiratory chain complex III/complex IV supercomplex.</text>
</comment>
<comment type="subcellular location">
    <subcellularLocation>
        <location evidence="3">Mitochondrion membrane</location>
        <topology evidence="3">Multi-pass membrane protein</topology>
    </subcellularLocation>
</comment>
<comment type="similarity">
    <text evidence="5">Belongs to the RCF1 family.</text>
</comment>
<reference key="1">
    <citation type="journal article" date="2011" name="PLoS Genet.">
        <title>Genomic analysis of the necrotrophic fungal pathogens Sclerotinia sclerotiorum and Botrytis cinerea.</title>
        <authorList>
            <person name="Amselem J."/>
            <person name="Cuomo C.A."/>
            <person name="van Kan J.A.L."/>
            <person name="Viaud M."/>
            <person name="Benito E.P."/>
            <person name="Couloux A."/>
            <person name="Coutinho P.M."/>
            <person name="de Vries R.P."/>
            <person name="Dyer P.S."/>
            <person name="Fillinger S."/>
            <person name="Fournier E."/>
            <person name="Gout L."/>
            <person name="Hahn M."/>
            <person name="Kohn L."/>
            <person name="Lapalu N."/>
            <person name="Plummer K.M."/>
            <person name="Pradier J.-M."/>
            <person name="Quevillon E."/>
            <person name="Sharon A."/>
            <person name="Simon A."/>
            <person name="ten Have A."/>
            <person name="Tudzynski B."/>
            <person name="Tudzynski P."/>
            <person name="Wincker P."/>
            <person name="Andrew M."/>
            <person name="Anthouard V."/>
            <person name="Beever R.E."/>
            <person name="Beffa R."/>
            <person name="Benoit I."/>
            <person name="Bouzid O."/>
            <person name="Brault B."/>
            <person name="Chen Z."/>
            <person name="Choquer M."/>
            <person name="Collemare J."/>
            <person name="Cotton P."/>
            <person name="Danchin E.G."/>
            <person name="Da Silva C."/>
            <person name="Gautier A."/>
            <person name="Giraud C."/>
            <person name="Giraud T."/>
            <person name="Gonzalez C."/>
            <person name="Grossetete S."/>
            <person name="Gueldener U."/>
            <person name="Henrissat B."/>
            <person name="Howlett B.J."/>
            <person name="Kodira C."/>
            <person name="Kretschmer M."/>
            <person name="Lappartient A."/>
            <person name="Leroch M."/>
            <person name="Levis C."/>
            <person name="Mauceli E."/>
            <person name="Neuveglise C."/>
            <person name="Oeser B."/>
            <person name="Pearson M."/>
            <person name="Poulain J."/>
            <person name="Poussereau N."/>
            <person name="Quesneville H."/>
            <person name="Rascle C."/>
            <person name="Schumacher J."/>
            <person name="Segurens B."/>
            <person name="Sexton A."/>
            <person name="Silva E."/>
            <person name="Sirven C."/>
            <person name="Soanes D.M."/>
            <person name="Talbot N.J."/>
            <person name="Templeton M."/>
            <person name="Yandava C."/>
            <person name="Yarden O."/>
            <person name="Zeng Q."/>
            <person name="Rollins J.A."/>
            <person name="Lebrun M.-H."/>
            <person name="Dickman M."/>
        </authorList>
    </citation>
    <scope>NUCLEOTIDE SEQUENCE [LARGE SCALE GENOMIC DNA]</scope>
    <source>
        <strain>B05.10</strain>
    </source>
</reference>
<reference key="2">
    <citation type="journal article" date="2012" name="Eukaryot. Cell">
        <title>Genome update of Botrytis cinerea strains B05.10 and T4.</title>
        <authorList>
            <person name="Staats M."/>
            <person name="van Kan J.A.L."/>
        </authorList>
    </citation>
    <scope>NUCLEOTIDE SEQUENCE [LARGE SCALE GENOMIC DNA]</scope>
    <scope>GENOME REANNOTATION</scope>
    <source>
        <strain>B05.10</strain>
    </source>
</reference>
<reference key="3">
    <citation type="journal article" date="2017" name="Mol. Plant Pathol.">
        <title>A gapless genome sequence of the fungus Botrytis cinerea.</title>
        <authorList>
            <person name="van Kan J.A.L."/>
            <person name="Stassen J.H.M."/>
            <person name="Mosbach A."/>
            <person name="van der Lee T.A.J."/>
            <person name="Faino L."/>
            <person name="Farmer A.D."/>
            <person name="Papasotiriou D.G."/>
            <person name="Zhou S."/>
            <person name="Seidl M.F."/>
            <person name="Cottam E."/>
            <person name="Edel D."/>
            <person name="Hahn M."/>
            <person name="Schwartz D.C."/>
            <person name="Dietrich R.A."/>
            <person name="Widdison S."/>
            <person name="Scalliet G."/>
        </authorList>
    </citation>
    <scope>NUCLEOTIDE SEQUENCE [LARGE SCALE GENOMIC DNA]</scope>
    <scope>GENOME REANNOTATION</scope>
    <source>
        <strain>B05.10</strain>
    </source>
</reference>
<sequence>MSNSTPLPSSFDGDTDFYEENRWQKLTRRLKEEPLIPLGCILTSLALVGASRSIRAGDHNRTQRMFRARIYAQGFTLLAMVAGSMYWDSDRKKRKEFEGVLAETKAKEKNEAWIRELEARDEEEKEMRRARDERRRRAEGRPAPKAVVTDAPAEEGEKPKGGVMEQMSGLVWGKK</sequence>
<proteinExistence type="inferred from homology"/>